<gene>
    <name evidence="1" type="primary">nqrE</name>
</gene>
<organism>
    <name type="scientific">Vibrio anguillarum</name>
    <name type="common">Listonella anguillarum</name>
    <dbReference type="NCBI Taxonomy" id="55601"/>
    <lineage>
        <taxon>Bacteria</taxon>
        <taxon>Pseudomonadati</taxon>
        <taxon>Pseudomonadota</taxon>
        <taxon>Gammaproteobacteria</taxon>
        <taxon>Vibrionales</taxon>
        <taxon>Vibrionaceae</taxon>
        <taxon>Vibrio</taxon>
    </lineage>
</organism>
<feature type="chain" id="PRO_0000214258" description="Na(+)-translocating NADH-quinone reductase subunit E">
    <location>
        <begin position="1"/>
        <end position="198"/>
    </location>
</feature>
<feature type="transmembrane region" description="Helical" evidence="1">
    <location>
        <begin position="11"/>
        <end position="31"/>
    </location>
</feature>
<feature type="transmembrane region" description="Helical" evidence="1">
    <location>
        <begin position="39"/>
        <end position="59"/>
    </location>
</feature>
<feature type="transmembrane region" description="Helical" evidence="1">
    <location>
        <begin position="77"/>
        <end position="97"/>
    </location>
</feature>
<feature type="transmembrane region" description="Helical" evidence="1">
    <location>
        <begin position="110"/>
        <end position="130"/>
    </location>
</feature>
<feature type="transmembrane region" description="Helical" evidence="1">
    <location>
        <begin position="140"/>
        <end position="160"/>
    </location>
</feature>
<feature type="transmembrane region" description="Helical" evidence="1">
    <location>
        <begin position="176"/>
        <end position="196"/>
    </location>
</feature>
<evidence type="ECO:0000255" key="1">
    <source>
        <dbReference type="HAMAP-Rule" id="MF_00429"/>
    </source>
</evidence>
<comment type="function">
    <text evidence="1">NQR complex catalyzes the reduction of ubiquinone-1 to ubiquinol by two successive reactions, coupled with the transport of Na(+) ions from the cytoplasm to the periplasm. NqrA to NqrE are probably involved in the second step, the conversion of ubisemiquinone to ubiquinol.</text>
</comment>
<comment type="catalytic activity">
    <reaction evidence="1">
        <text>a ubiquinone + n Na(+)(in) + NADH + H(+) = a ubiquinol + n Na(+)(out) + NAD(+)</text>
        <dbReference type="Rhea" id="RHEA:47748"/>
        <dbReference type="Rhea" id="RHEA-COMP:9565"/>
        <dbReference type="Rhea" id="RHEA-COMP:9566"/>
        <dbReference type="ChEBI" id="CHEBI:15378"/>
        <dbReference type="ChEBI" id="CHEBI:16389"/>
        <dbReference type="ChEBI" id="CHEBI:17976"/>
        <dbReference type="ChEBI" id="CHEBI:29101"/>
        <dbReference type="ChEBI" id="CHEBI:57540"/>
        <dbReference type="ChEBI" id="CHEBI:57945"/>
        <dbReference type="EC" id="7.2.1.1"/>
    </reaction>
</comment>
<comment type="subunit">
    <text evidence="1">Composed of six subunits; NqrA, NqrB, NqrC, NqrD, NqrE and NqrF.</text>
</comment>
<comment type="subcellular location">
    <subcellularLocation>
        <location evidence="1">Cell inner membrane</location>
        <topology evidence="1">Multi-pass membrane protein</topology>
    </subcellularLocation>
</comment>
<comment type="similarity">
    <text evidence="1">Belongs to the NqrDE/RnfAE family.</text>
</comment>
<name>NQRE_VIBAN</name>
<sequence>MEHYISLLVRSIFIENMALSFFLGMCTFLAVSKKVKTSFGLGIAVTVVLTISVPVNNLVYNLLLKPGALGENIDLTFLNFITFIGVIAALVQILEMILDRFFPPLYNALGIFLPLITVNCAIFGGVSFMVQRDYNFAESVVYGFGSGVGWMLAIVALAGIREKMKYSDVPPGLRGLGITFITAGLMALGFMSFSGVQL</sequence>
<protein>
    <recommendedName>
        <fullName evidence="1">Na(+)-translocating NADH-quinone reductase subunit E</fullName>
        <shortName evidence="1">Na(+)-NQR subunit E</shortName>
        <shortName evidence="1">Na(+)-translocating NQR subunit E</shortName>
        <ecNumber evidence="1">7.2.1.1</ecNumber>
    </recommendedName>
    <alternativeName>
        <fullName evidence="1">NQR complex subunit E</fullName>
    </alternativeName>
    <alternativeName>
        <fullName evidence="1">NQR-1 subunit E</fullName>
    </alternativeName>
</protein>
<proteinExistence type="inferred from homology"/>
<keyword id="KW-0997">Cell inner membrane</keyword>
<keyword id="KW-1003">Cell membrane</keyword>
<keyword id="KW-0406">Ion transport</keyword>
<keyword id="KW-0472">Membrane</keyword>
<keyword id="KW-0520">NAD</keyword>
<keyword id="KW-0915">Sodium</keyword>
<keyword id="KW-0739">Sodium transport</keyword>
<keyword id="KW-1278">Translocase</keyword>
<keyword id="KW-0812">Transmembrane</keyword>
<keyword id="KW-1133">Transmembrane helix</keyword>
<keyword id="KW-0813">Transport</keyword>
<keyword id="KW-0830">Ubiquinone</keyword>
<accession>Q75R60</accession>
<dbReference type="EC" id="7.2.1.1" evidence="1"/>
<dbReference type="EMBL" id="AB159077">
    <property type="protein sequence ID" value="BAD14952.1"/>
    <property type="molecule type" value="Genomic_DNA"/>
</dbReference>
<dbReference type="RefSeq" id="WP_013856175.1">
    <property type="nucleotide sequence ID" value="NZ_VTYO01000002.1"/>
</dbReference>
<dbReference type="SMR" id="Q75R60"/>
<dbReference type="STRING" id="55601.AA407_03535"/>
<dbReference type="GeneID" id="83859564"/>
<dbReference type="OMA" id="MCSFISI"/>
<dbReference type="OrthoDB" id="9803631at2"/>
<dbReference type="GO" id="GO:0009276">
    <property type="term" value="C:Gram-negative-bacterium-type cell wall"/>
    <property type="evidence" value="ECO:0007669"/>
    <property type="project" value="InterPro"/>
</dbReference>
<dbReference type="GO" id="GO:0005886">
    <property type="term" value="C:plasma membrane"/>
    <property type="evidence" value="ECO:0007669"/>
    <property type="project" value="UniProtKB-SubCell"/>
</dbReference>
<dbReference type="GO" id="GO:0016655">
    <property type="term" value="F:oxidoreductase activity, acting on NAD(P)H, quinone or similar compound as acceptor"/>
    <property type="evidence" value="ECO:0007669"/>
    <property type="project" value="UniProtKB-UniRule"/>
</dbReference>
<dbReference type="GO" id="GO:0022904">
    <property type="term" value="P:respiratory electron transport chain"/>
    <property type="evidence" value="ECO:0007669"/>
    <property type="project" value="InterPro"/>
</dbReference>
<dbReference type="GO" id="GO:0006814">
    <property type="term" value="P:sodium ion transport"/>
    <property type="evidence" value="ECO:0007669"/>
    <property type="project" value="UniProtKB-UniRule"/>
</dbReference>
<dbReference type="HAMAP" id="MF_00429">
    <property type="entry name" value="NqrE"/>
    <property type="match status" value="1"/>
</dbReference>
<dbReference type="InterPro" id="IPR003667">
    <property type="entry name" value="NqrDE/RnfAE"/>
</dbReference>
<dbReference type="InterPro" id="IPR050133">
    <property type="entry name" value="NqrDE/RnfAE_oxidrdctase"/>
</dbReference>
<dbReference type="InterPro" id="IPR010967">
    <property type="entry name" value="NqrE"/>
</dbReference>
<dbReference type="NCBIfam" id="TIGR01940">
    <property type="entry name" value="nqrE"/>
    <property type="match status" value="1"/>
</dbReference>
<dbReference type="PANTHER" id="PTHR30335">
    <property type="entry name" value="INTEGRAL MEMBRANE PROTEIN OF SOXR-REDUCING COMPLEX"/>
    <property type="match status" value="1"/>
</dbReference>
<dbReference type="PANTHER" id="PTHR30335:SF1">
    <property type="entry name" value="NA(+)-TRANSLOCATING NADH-QUINONE REDUCTASE SUBUNIT E"/>
    <property type="match status" value="1"/>
</dbReference>
<dbReference type="Pfam" id="PF02508">
    <property type="entry name" value="Rnf-Nqr"/>
    <property type="match status" value="1"/>
</dbReference>
<dbReference type="PIRSF" id="PIRSF006102">
    <property type="entry name" value="NQR_DE"/>
    <property type="match status" value="1"/>
</dbReference>
<reference key="1">
    <citation type="submission" date="2004-01" db="EMBL/GenBank/DDBJ databases">
        <title>Cloning, sequencing and transcriptional regulation of Na+-dependent NADH:quinone oxidoreductase gene of Vibrio anguillarum, a fish pathogen.</title>
        <authorList>
            <person name="Fujiwara-Nagata E."/>
            <person name="Eguchi Y."/>
            <person name="Utsumi R."/>
            <person name="Eguchi M."/>
        </authorList>
    </citation>
    <scope>NUCLEOTIDE SEQUENCE [GENOMIC DNA]</scope>
</reference>